<comment type="function">
    <text evidence="1">A type II topoisomerase that negatively supercoils closed circular double-stranded (ds) DNA in an ATP-dependent manner to modulate DNA topology and maintain chromosomes in an underwound state. Negative supercoiling favors strand separation, and DNA replication, transcription, recombination and repair, all of which involve strand separation. Also able to catalyze the interconversion of other topological isomers of dsDNA rings, including catenanes and knotted rings. Type II topoisomerases break and join 2 DNA strands simultaneously in an ATP-dependent manner.</text>
</comment>
<comment type="catalytic activity">
    <reaction evidence="1">
        <text>ATP-dependent breakage, passage and rejoining of double-stranded DNA.</text>
        <dbReference type="EC" id="5.6.2.2"/>
    </reaction>
</comment>
<comment type="subunit">
    <text evidence="1">Heterotetramer, composed of two GyrA and two GyrB chains. In the heterotetramer, GyrA contains the active site tyrosine that forms a transient covalent intermediate with DNA, while GyrB binds cofactors and catalyzes ATP hydrolysis.</text>
</comment>
<comment type="subcellular location">
    <subcellularLocation>
        <location evidence="1">Cytoplasm</location>
    </subcellularLocation>
</comment>
<comment type="miscellaneous">
    <text evidence="1">Few gyrases are as efficient as E.coli at forming negative supercoils. Not all organisms have 2 type II topoisomerases; in organisms with a single type II topoisomerase this enzyme also has to decatenate newly replicated chromosomes.</text>
</comment>
<comment type="similarity">
    <text evidence="1">Belongs to the type II topoisomerase GyrA/ParC subunit family.</text>
</comment>
<name>GYRA_RICPR</name>
<evidence type="ECO:0000255" key="1">
    <source>
        <dbReference type="HAMAP-Rule" id="MF_01897"/>
    </source>
</evidence>
<evidence type="ECO:0000255" key="2">
    <source>
        <dbReference type="PROSITE-ProRule" id="PRU01384"/>
    </source>
</evidence>
<sequence>MIDKYSSNLVPVNIEDEMKVSYLDYAMSVIVSRAIPDVRDGLKPVHRRIIYSMYEAGNHASKPYRKSARIVGDVMGKYHPHGDSAIYDSLVRMAQDFSLRLPLVDGQGNFGSMDGDAAAAMRYTESRMAKVAHKLVEDIDKGTVSFNINYDGSEEEPSVLPAMFPNLLVNGSGGIAVGMATNIPPHNLGEIIDACCLYIDNHDIEILDLLEVVKGPDFPTGSMILGISGIRSAYLTGRGSIIMRGKAEIENVGNSRQAIIITEIPYMVNKARLVEKIAEMVKEKRIEGISDLRDESNKNGIRIFIELKKDVVAEVVLNQIYACTQLQTNFGVIMLALKDGLPKVMNLKEVIAAFVSFREVVITNRTIYLLNKARDRAHILLGLTIAISNIDEIIYIIKASNDTNLAKQELMARQWEVLDILPLIKLVDDKVILNERGTLSFTEVQAKAILEMKLQRLTAMEKEKLEQDLKHLATDIAEYLNILASRTRLLEILKEELIKVKEEFASPRLTSIEFGEFDQDIEDLIQREEMVVTVTLGGYIKRVPLSSYRSQKRGGKGRSGLSMRDEDITTQVFVGSTHTPMLFFSNIGKVYSLKLYKLPLSNPQGKGRPMVNILSLQENEHITNIMPLPENQDEWDHLNIMFATAKGNIRRSDLLDFKKIQSNGKIAIRLDEDDKLIDVKPCKEDEHILLATKAGKALRFPVESLRIIKSRISDGVRGMKLAKEDSVISMTVLKGINSTKEDRDAYLTVPWEKRLEIAKGEEFNLEELGVNLNADSILEMANSEEFILTVTENGFGKRSSAYGYRITDRGGSGIINMDINDKTGLVVGVMPVKMDDELMLITNSGKLIRCKLESVRITGRNTSGVILFKLDDDEKVVSVSLIAETSESEEASELAEEGLENDVKV</sequence>
<proteinExistence type="inferred from homology"/>
<protein>
    <recommendedName>
        <fullName evidence="1">DNA gyrase subunit A</fullName>
        <ecNumber evidence="1">5.6.2.2</ecNumber>
    </recommendedName>
</protein>
<reference key="1">
    <citation type="journal article" date="1994" name="Gene">
        <title>Sequence analysis of the Rickettsia prowazekii gyrA gene.</title>
        <authorList>
            <person name="Wood D.O."/>
            <person name="Waite R.T."/>
        </authorList>
    </citation>
    <scope>NUCLEOTIDE SEQUENCE [GENOMIC DNA]</scope>
    <source>
        <strain>Madrid E</strain>
    </source>
</reference>
<reference key="2">
    <citation type="journal article" date="1998" name="Nature">
        <title>The genome sequence of Rickettsia prowazekii and the origin of mitochondria.</title>
        <authorList>
            <person name="Andersson S.G.E."/>
            <person name="Zomorodipour A."/>
            <person name="Andersson J.O."/>
            <person name="Sicheritz-Ponten T."/>
            <person name="Alsmark U.C.M."/>
            <person name="Podowski R.M."/>
            <person name="Naeslund A.K."/>
            <person name="Eriksson A.-S."/>
            <person name="Winkler H.H."/>
            <person name="Kurland C.G."/>
        </authorList>
    </citation>
    <scope>NUCLEOTIDE SEQUENCE [LARGE SCALE GENOMIC DNA]</scope>
    <source>
        <strain>Madrid E</strain>
    </source>
</reference>
<gene>
    <name evidence="1" type="primary">gyrA</name>
    <name type="ordered locus">RP206</name>
</gene>
<keyword id="KW-0067">ATP-binding</keyword>
<keyword id="KW-0963">Cytoplasm</keyword>
<keyword id="KW-0238">DNA-binding</keyword>
<keyword id="KW-0413">Isomerase</keyword>
<keyword id="KW-0547">Nucleotide-binding</keyword>
<keyword id="KW-1185">Reference proteome</keyword>
<keyword id="KW-0799">Topoisomerase</keyword>
<organism>
    <name type="scientific">Rickettsia prowazekii (strain Madrid E)</name>
    <dbReference type="NCBI Taxonomy" id="272947"/>
    <lineage>
        <taxon>Bacteria</taxon>
        <taxon>Pseudomonadati</taxon>
        <taxon>Pseudomonadota</taxon>
        <taxon>Alphaproteobacteria</taxon>
        <taxon>Rickettsiales</taxon>
        <taxon>Rickettsiaceae</taxon>
        <taxon>Rickettsieae</taxon>
        <taxon>Rickettsia</taxon>
        <taxon>typhus group</taxon>
    </lineage>
</organism>
<dbReference type="EC" id="5.6.2.2" evidence="1"/>
<dbReference type="EMBL" id="U02931">
    <property type="protein sequence ID" value="AAA68146.1"/>
    <property type="molecule type" value="Genomic_DNA"/>
</dbReference>
<dbReference type="EMBL" id="AJ235270">
    <property type="protein sequence ID" value="CAA14671.1"/>
    <property type="molecule type" value="Genomic_DNA"/>
</dbReference>
<dbReference type="PIR" id="H71731">
    <property type="entry name" value="H71731"/>
</dbReference>
<dbReference type="RefSeq" id="NP_220594.1">
    <property type="nucleotide sequence ID" value="NC_000963.1"/>
</dbReference>
<dbReference type="RefSeq" id="WP_004595986.1">
    <property type="nucleotide sequence ID" value="NC_000963.1"/>
</dbReference>
<dbReference type="SMR" id="P41080"/>
<dbReference type="STRING" id="272947.gene:17555287"/>
<dbReference type="EnsemblBacteria" id="CAA14671">
    <property type="protein sequence ID" value="CAA14671"/>
    <property type="gene ID" value="CAA14671"/>
</dbReference>
<dbReference type="KEGG" id="rpr:RP206"/>
<dbReference type="PATRIC" id="fig|272947.5.peg.215"/>
<dbReference type="eggNOG" id="COG0188">
    <property type="taxonomic scope" value="Bacteria"/>
</dbReference>
<dbReference type="HOGENOM" id="CLU_002977_6_2_5"/>
<dbReference type="OrthoDB" id="9806486at2"/>
<dbReference type="Proteomes" id="UP000002480">
    <property type="component" value="Chromosome"/>
</dbReference>
<dbReference type="GO" id="GO:0005694">
    <property type="term" value="C:chromosome"/>
    <property type="evidence" value="ECO:0007669"/>
    <property type="project" value="InterPro"/>
</dbReference>
<dbReference type="GO" id="GO:0005737">
    <property type="term" value="C:cytoplasm"/>
    <property type="evidence" value="ECO:0007669"/>
    <property type="project" value="UniProtKB-SubCell"/>
</dbReference>
<dbReference type="GO" id="GO:0009330">
    <property type="term" value="C:DNA topoisomerase type II (double strand cut, ATP-hydrolyzing) complex"/>
    <property type="evidence" value="ECO:0007669"/>
    <property type="project" value="TreeGrafter"/>
</dbReference>
<dbReference type="GO" id="GO:0005524">
    <property type="term" value="F:ATP binding"/>
    <property type="evidence" value="ECO:0007669"/>
    <property type="project" value="UniProtKB-UniRule"/>
</dbReference>
<dbReference type="GO" id="GO:0003677">
    <property type="term" value="F:DNA binding"/>
    <property type="evidence" value="ECO:0007669"/>
    <property type="project" value="UniProtKB-UniRule"/>
</dbReference>
<dbReference type="GO" id="GO:0034335">
    <property type="term" value="F:DNA negative supercoiling activity"/>
    <property type="evidence" value="ECO:0007669"/>
    <property type="project" value="UniProtKB-ARBA"/>
</dbReference>
<dbReference type="GO" id="GO:0006265">
    <property type="term" value="P:DNA topological change"/>
    <property type="evidence" value="ECO:0007669"/>
    <property type="project" value="UniProtKB-UniRule"/>
</dbReference>
<dbReference type="GO" id="GO:0006261">
    <property type="term" value="P:DNA-templated DNA replication"/>
    <property type="evidence" value="ECO:0007669"/>
    <property type="project" value="UniProtKB-UniRule"/>
</dbReference>
<dbReference type="CDD" id="cd00187">
    <property type="entry name" value="TOP4c"/>
    <property type="match status" value="1"/>
</dbReference>
<dbReference type="FunFam" id="1.10.268.10:FF:000001">
    <property type="entry name" value="DNA gyrase subunit A"/>
    <property type="match status" value="1"/>
</dbReference>
<dbReference type="FunFam" id="3.30.1360.40:FF:000002">
    <property type="entry name" value="DNA gyrase subunit A"/>
    <property type="match status" value="1"/>
</dbReference>
<dbReference type="FunFam" id="3.90.199.10:FF:000001">
    <property type="entry name" value="DNA gyrase subunit A"/>
    <property type="match status" value="1"/>
</dbReference>
<dbReference type="Gene3D" id="3.30.1360.40">
    <property type="match status" value="1"/>
</dbReference>
<dbReference type="Gene3D" id="2.120.10.90">
    <property type="entry name" value="DNA gyrase/topoisomerase IV, subunit A, C-terminal"/>
    <property type="match status" value="1"/>
</dbReference>
<dbReference type="Gene3D" id="3.90.199.10">
    <property type="entry name" value="Topoisomerase II, domain 5"/>
    <property type="match status" value="1"/>
</dbReference>
<dbReference type="Gene3D" id="1.10.268.10">
    <property type="entry name" value="Topoisomerase, domain 3"/>
    <property type="match status" value="1"/>
</dbReference>
<dbReference type="HAMAP" id="MF_01897">
    <property type="entry name" value="GyrA"/>
    <property type="match status" value="1"/>
</dbReference>
<dbReference type="InterPro" id="IPR005743">
    <property type="entry name" value="GyrA"/>
</dbReference>
<dbReference type="InterPro" id="IPR006691">
    <property type="entry name" value="GyrA/parC_rep"/>
</dbReference>
<dbReference type="InterPro" id="IPR035516">
    <property type="entry name" value="Gyrase/topoIV_suA_C"/>
</dbReference>
<dbReference type="InterPro" id="IPR013760">
    <property type="entry name" value="Topo_IIA-like_dom_sf"/>
</dbReference>
<dbReference type="InterPro" id="IPR013758">
    <property type="entry name" value="Topo_IIA_A/C_ab"/>
</dbReference>
<dbReference type="InterPro" id="IPR013757">
    <property type="entry name" value="Topo_IIA_A_a_sf"/>
</dbReference>
<dbReference type="InterPro" id="IPR002205">
    <property type="entry name" value="Topo_IIA_dom_A"/>
</dbReference>
<dbReference type="InterPro" id="IPR050220">
    <property type="entry name" value="Type_II_DNA_Topoisomerases"/>
</dbReference>
<dbReference type="NCBIfam" id="TIGR01063">
    <property type="entry name" value="gyrA"/>
    <property type="match status" value="1"/>
</dbReference>
<dbReference type="NCBIfam" id="NF004043">
    <property type="entry name" value="PRK05560.1"/>
    <property type="match status" value="1"/>
</dbReference>
<dbReference type="NCBIfam" id="NF004044">
    <property type="entry name" value="PRK05561.1"/>
    <property type="match status" value="1"/>
</dbReference>
<dbReference type="PANTHER" id="PTHR43493:SF5">
    <property type="entry name" value="DNA GYRASE SUBUNIT A, CHLOROPLASTIC_MITOCHONDRIAL"/>
    <property type="match status" value="1"/>
</dbReference>
<dbReference type="PANTHER" id="PTHR43493">
    <property type="entry name" value="DNA GYRASE/TOPOISOMERASE SUBUNIT A"/>
    <property type="match status" value="1"/>
</dbReference>
<dbReference type="Pfam" id="PF03989">
    <property type="entry name" value="DNA_gyraseA_C"/>
    <property type="match status" value="6"/>
</dbReference>
<dbReference type="Pfam" id="PF00521">
    <property type="entry name" value="DNA_topoisoIV"/>
    <property type="match status" value="1"/>
</dbReference>
<dbReference type="SMART" id="SM00434">
    <property type="entry name" value="TOP4c"/>
    <property type="match status" value="1"/>
</dbReference>
<dbReference type="SUPFAM" id="SSF101904">
    <property type="entry name" value="GyrA/ParC C-terminal domain-like"/>
    <property type="match status" value="1"/>
</dbReference>
<dbReference type="SUPFAM" id="SSF56719">
    <property type="entry name" value="Type II DNA topoisomerase"/>
    <property type="match status" value="1"/>
</dbReference>
<dbReference type="PROSITE" id="PS52040">
    <property type="entry name" value="TOPO_IIA"/>
    <property type="match status" value="1"/>
</dbReference>
<feature type="chain" id="PRO_0000145247" description="DNA gyrase subunit A">
    <location>
        <begin position="1"/>
        <end position="905"/>
    </location>
</feature>
<feature type="domain" description="Topo IIA-type catalytic" evidence="2">
    <location>
        <begin position="35"/>
        <end position="524"/>
    </location>
</feature>
<feature type="short sequence motif" description="GyrA-box" evidence="1">
    <location>
        <begin position="551"/>
        <end position="557"/>
    </location>
</feature>
<feature type="active site" description="O-(5'-phospho-DNA)-tyrosine intermediate" evidence="1">
    <location>
        <position position="123"/>
    </location>
</feature>
<accession>P41080</accession>